<feature type="chain" id="PRO_0000266770" description="Small ribosomal subunit protein bS21">
    <location>
        <begin position="1"/>
        <end position="68"/>
    </location>
</feature>
<feature type="region of interest" description="Disordered" evidence="2">
    <location>
        <begin position="35"/>
        <end position="68"/>
    </location>
</feature>
<feature type="compositionally biased region" description="Basic and acidic residues" evidence="2">
    <location>
        <begin position="37"/>
        <end position="49"/>
    </location>
</feature>
<feature type="compositionally biased region" description="Basic residues" evidence="2">
    <location>
        <begin position="50"/>
        <end position="59"/>
    </location>
</feature>
<keyword id="KW-1185">Reference proteome</keyword>
<keyword id="KW-0687">Ribonucleoprotein</keyword>
<keyword id="KW-0689">Ribosomal protein</keyword>
<gene>
    <name evidence="1" type="primary">rpsU</name>
    <name type="ordered locus">Sala_1039</name>
</gene>
<evidence type="ECO:0000255" key="1">
    <source>
        <dbReference type="HAMAP-Rule" id="MF_00358"/>
    </source>
</evidence>
<evidence type="ECO:0000256" key="2">
    <source>
        <dbReference type="SAM" id="MobiDB-lite"/>
    </source>
</evidence>
<evidence type="ECO:0000305" key="3"/>
<sequence>MQIIVRDNNVDQALRALKKKLQREGVYREMKLRRHYEKPSEKRARERAAAVRRARKMERKRMERDGIK</sequence>
<protein>
    <recommendedName>
        <fullName evidence="1">Small ribosomal subunit protein bS21</fullName>
    </recommendedName>
    <alternativeName>
        <fullName evidence="3">30S ribosomal protein S21</fullName>
    </alternativeName>
</protein>
<accession>Q1GUB6</accession>
<proteinExistence type="inferred from homology"/>
<comment type="similarity">
    <text evidence="1">Belongs to the bacterial ribosomal protein bS21 family.</text>
</comment>
<name>RS21_SPHAL</name>
<dbReference type="EMBL" id="CP000356">
    <property type="protein sequence ID" value="ABF52756.1"/>
    <property type="molecule type" value="Genomic_DNA"/>
</dbReference>
<dbReference type="RefSeq" id="WP_003047635.1">
    <property type="nucleotide sequence ID" value="NC_008048.1"/>
</dbReference>
<dbReference type="SMR" id="Q1GUB6"/>
<dbReference type="STRING" id="317655.Sala_1039"/>
<dbReference type="KEGG" id="sal:Sala_1039"/>
<dbReference type="eggNOG" id="COG0828">
    <property type="taxonomic scope" value="Bacteria"/>
</dbReference>
<dbReference type="HOGENOM" id="CLU_159258_0_1_5"/>
<dbReference type="OrthoDB" id="9811907at2"/>
<dbReference type="Proteomes" id="UP000006578">
    <property type="component" value="Chromosome"/>
</dbReference>
<dbReference type="GO" id="GO:1990904">
    <property type="term" value="C:ribonucleoprotein complex"/>
    <property type="evidence" value="ECO:0007669"/>
    <property type="project" value="UniProtKB-KW"/>
</dbReference>
<dbReference type="GO" id="GO:0005840">
    <property type="term" value="C:ribosome"/>
    <property type="evidence" value="ECO:0007669"/>
    <property type="project" value="UniProtKB-KW"/>
</dbReference>
<dbReference type="GO" id="GO:0003735">
    <property type="term" value="F:structural constituent of ribosome"/>
    <property type="evidence" value="ECO:0007669"/>
    <property type="project" value="InterPro"/>
</dbReference>
<dbReference type="GO" id="GO:0006412">
    <property type="term" value="P:translation"/>
    <property type="evidence" value="ECO:0007669"/>
    <property type="project" value="UniProtKB-UniRule"/>
</dbReference>
<dbReference type="Gene3D" id="1.20.5.1150">
    <property type="entry name" value="Ribosomal protein S8"/>
    <property type="match status" value="1"/>
</dbReference>
<dbReference type="HAMAP" id="MF_00358">
    <property type="entry name" value="Ribosomal_bS21"/>
    <property type="match status" value="1"/>
</dbReference>
<dbReference type="InterPro" id="IPR001911">
    <property type="entry name" value="Ribosomal_bS21"/>
</dbReference>
<dbReference type="InterPro" id="IPR018278">
    <property type="entry name" value="Ribosomal_bS21_CS"/>
</dbReference>
<dbReference type="InterPro" id="IPR038380">
    <property type="entry name" value="Ribosomal_bS21_sf"/>
</dbReference>
<dbReference type="NCBIfam" id="TIGR00030">
    <property type="entry name" value="S21p"/>
    <property type="match status" value="1"/>
</dbReference>
<dbReference type="PANTHER" id="PTHR21109">
    <property type="entry name" value="MITOCHONDRIAL 28S RIBOSOMAL PROTEIN S21"/>
    <property type="match status" value="1"/>
</dbReference>
<dbReference type="PANTHER" id="PTHR21109:SF0">
    <property type="entry name" value="SMALL RIBOSOMAL SUBUNIT PROTEIN BS21M"/>
    <property type="match status" value="1"/>
</dbReference>
<dbReference type="Pfam" id="PF01165">
    <property type="entry name" value="Ribosomal_S21"/>
    <property type="match status" value="1"/>
</dbReference>
<dbReference type="PRINTS" id="PR00976">
    <property type="entry name" value="RIBOSOMALS21"/>
</dbReference>
<dbReference type="PROSITE" id="PS01181">
    <property type="entry name" value="RIBOSOMAL_S21"/>
    <property type="match status" value="1"/>
</dbReference>
<reference key="1">
    <citation type="journal article" date="2009" name="Proc. Natl. Acad. Sci. U.S.A.">
        <title>The genomic basis of trophic strategy in marine bacteria.</title>
        <authorList>
            <person name="Lauro F.M."/>
            <person name="McDougald D."/>
            <person name="Thomas T."/>
            <person name="Williams T.J."/>
            <person name="Egan S."/>
            <person name="Rice S."/>
            <person name="DeMaere M.Z."/>
            <person name="Ting L."/>
            <person name="Ertan H."/>
            <person name="Johnson J."/>
            <person name="Ferriera S."/>
            <person name="Lapidus A."/>
            <person name="Anderson I."/>
            <person name="Kyrpides N."/>
            <person name="Munk A.C."/>
            <person name="Detter C."/>
            <person name="Han C.S."/>
            <person name="Brown M.V."/>
            <person name="Robb F.T."/>
            <person name="Kjelleberg S."/>
            <person name="Cavicchioli R."/>
        </authorList>
    </citation>
    <scope>NUCLEOTIDE SEQUENCE [LARGE SCALE GENOMIC DNA]</scope>
    <source>
        <strain>DSM 13593 / LMG 18877 / RB2256</strain>
    </source>
</reference>
<organism>
    <name type="scientific">Sphingopyxis alaskensis (strain DSM 13593 / LMG 18877 / RB2256)</name>
    <name type="common">Sphingomonas alaskensis</name>
    <dbReference type="NCBI Taxonomy" id="317655"/>
    <lineage>
        <taxon>Bacteria</taxon>
        <taxon>Pseudomonadati</taxon>
        <taxon>Pseudomonadota</taxon>
        <taxon>Alphaproteobacteria</taxon>
        <taxon>Sphingomonadales</taxon>
        <taxon>Sphingomonadaceae</taxon>
        <taxon>Sphingopyxis</taxon>
    </lineage>
</organism>